<organism>
    <name type="scientific">Yersinia pestis</name>
    <dbReference type="NCBI Taxonomy" id="632"/>
    <lineage>
        <taxon>Bacteria</taxon>
        <taxon>Pseudomonadati</taxon>
        <taxon>Pseudomonadota</taxon>
        <taxon>Gammaproteobacteria</taxon>
        <taxon>Enterobacterales</taxon>
        <taxon>Yersiniaceae</taxon>
        <taxon>Yersinia</taxon>
    </lineage>
</organism>
<sequence>MHCPFCAAVDTKVIDSRLVSDGSQVRRRRQCLDCNERFTTFEVAELVLPRVIKSDEVREPFNEEKLRRGMLKALEKRPVSSDDVETAISHIKSQLRATGEREVPTKMVGNLVMEALKRLDKVAYIRFASVYRSFEDVREFGEEIARLQD</sequence>
<keyword id="KW-0067">ATP-binding</keyword>
<keyword id="KW-0238">DNA-binding</keyword>
<keyword id="KW-0479">Metal-binding</keyword>
<keyword id="KW-0547">Nucleotide-binding</keyword>
<keyword id="KW-1185">Reference proteome</keyword>
<keyword id="KW-0678">Repressor</keyword>
<keyword id="KW-0804">Transcription</keyword>
<keyword id="KW-0805">Transcription regulation</keyword>
<keyword id="KW-0862">Zinc</keyword>
<keyword id="KW-0863">Zinc-finger</keyword>
<proteinExistence type="inferred from homology"/>
<evidence type="ECO:0000255" key="1">
    <source>
        <dbReference type="HAMAP-Rule" id="MF_00440"/>
    </source>
</evidence>
<name>NRDR_YERPE</name>
<reference key="1">
    <citation type="journal article" date="2001" name="Nature">
        <title>Genome sequence of Yersinia pestis, the causative agent of plague.</title>
        <authorList>
            <person name="Parkhill J."/>
            <person name="Wren B.W."/>
            <person name="Thomson N.R."/>
            <person name="Titball R.W."/>
            <person name="Holden M.T.G."/>
            <person name="Prentice M.B."/>
            <person name="Sebaihia M."/>
            <person name="James K.D."/>
            <person name="Churcher C.M."/>
            <person name="Mungall K.L."/>
            <person name="Baker S."/>
            <person name="Basham D."/>
            <person name="Bentley S.D."/>
            <person name="Brooks K."/>
            <person name="Cerdeno-Tarraga A.-M."/>
            <person name="Chillingworth T."/>
            <person name="Cronin A."/>
            <person name="Davies R.M."/>
            <person name="Davis P."/>
            <person name="Dougan G."/>
            <person name="Feltwell T."/>
            <person name="Hamlin N."/>
            <person name="Holroyd S."/>
            <person name="Jagels K."/>
            <person name="Karlyshev A.V."/>
            <person name="Leather S."/>
            <person name="Moule S."/>
            <person name="Oyston P.C.F."/>
            <person name="Quail M.A."/>
            <person name="Rutherford K.M."/>
            <person name="Simmonds M."/>
            <person name="Skelton J."/>
            <person name="Stevens K."/>
            <person name="Whitehead S."/>
            <person name="Barrell B.G."/>
        </authorList>
    </citation>
    <scope>NUCLEOTIDE SEQUENCE [LARGE SCALE GENOMIC DNA]</scope>
    <source>
        <strain>CO-92 / Biovar Orientalis</strain>
    </source>
</reference>
<reference key="2">
    <citation type="journal article" date="2002" name="J. Bacteriol.">
        <title>Genome sequence of Yersinia pestis KIM.</title>
        <authorList>
            <person name="Deng W."/>
            <person name="Burland V."/>
            <person name="Plunkett G. III"/>
            <person name="Boutin A."/>
            <person name="Mayhew G.F."/>
            <person name="Liss P."/>
            <person name="Perna N.T."/>
            <person name="Rose D.J."/>
            <person name="Mau B."/>
            <person name="Zhou S."/>
            <person name="Schwartz D.C."/>
            <person name="Fetherston J.D."/>
            <person name="Lindler L.E."/>
            <person name="Brubaker R.R."/>
            <person name="Plano G.V."/>
            <person name="Straley S.C."/>
            <person name="McDonough K.A."/>
            <person name="Nilles M.L."/>
            <person name="Matson J.S."/>
            <person name="Blattner F.R."/>
            <person name="Perry R.D."/>
        </authorList>
    </citation>
    <scope>NUCLEOTIDE SEQUENCE [LARGE SCALE GENOMIC DNA]</scope>
    <source>
        <strain>KIM10+ / Biovar Mediaevalis</strain>
    </source>
</reference>
<reference key="3">
    <citation type="journal article" date="2004" name="DNA Res.">
        <title>Complete genome sequence of Yersinia pestis strain 91001, an isolate avirulent to humans.</title>
        <authorList>
            <person name="Song Y."/>
            <person name="Tong Z."/>
            <person name="Wang J."/>
            <person name="Wang L."/>
            <person name="Guo Z."/>
            <person name="Han Y."/>
            <person name="Zhang J."/>
            <person name="Pei D."/>
            <person name="Zhou D."/>
            <person name="Qin H."/>
            <person name="Pang X."/>
            <person name="Han Y."/>
            <person name="Zhai J."/>
            <person name="Li M."/>
            <person name="Cui B."/>
            <person name="Qi Z."/>
            <person name="Jin L."/>
            <person name="Dai R."/>
            <person name="Chen F."/>
            <person name="Li S."/>
            <person name="Ye C."/>
            <person name="Du Z."/>
            <person name="Lin W."/>
            <person name="Wang J."/>
            <person name="Yu J."/>
            <person name="Yang H."/>
            <person name="Wang J."/>
            <person name="Huang P."/>
            <person name="Yang R."/>
        </authorList>
    </citation>
    <scope>NUCLEOTIDE SEQUENCE [LARGE SCALE GENOMIC DNA]</scope>
    <source>
        <strain>91001 / Biovar Mediaevalis</strain>
    </source>
</reference>
<accession>Q8ZC39</accession>
<accession>Q0WC99</accession>
<comment type="function">
    <text evidence="1">Negatively regulates transcription of bacterial ribonucleotide reductase nrd genes and operons by binding to NrdR-boxes.</text>
</comment>
<comment type="cofactor">
    <cofactor evidence="1">
        <name>Zn(2+)</name>
        <dbReference type="ChEBI" id="CHEBI:29105"/>
    </cofactor>
    <text evidence="1">Binds 1 zinc ion.</text>
</comment>
<comment type="similarity">
    <text evidence="1">Belongs to the NrdR family.</text>
</comment>
<protein>
    <recommendedName>
        <fullName evidence="1">Transcriptional repressor NrdR</fullName>
    </recommendedName>
</protein>
<feature type="chain" id="PRO_0000182385" description="Transcriptional repressor NrdR">
    <location>
        <begin position="1"/>
        <end position="149"/>
    </location>
</feature>
<feature type="domain" description="ATP-cone" evidence="1">
    <location>
        <begin position="49"/>
        <end position="139"/>
    </location>
</feature>
<feature type="zinc finger region" evidence="1">
    <location>
        <begin position="3"/>
        <end position="34"/>
    </location>
</feature>
<gene>
    <name evidence="1" type="primary">nrdR</name>
    <name type="ordered locus">YPO3184</name>
    <name type="ordered locus">y0999</name>
    <name type="ordered locus">YP_0747</name>
</gene>
<dbReference type="EMBL" id="AL590842">
    <property type="protein sequence ID" value="CAL21779.1"/>
    <property type="molecule type" value="Genomic_DNA"/>
</dbReference>
<dbReference type="EMBL" id="AE009952">
    <property type="protein sequence ID" value="AAM84580.1"/>
    <property type="molecule type" value="Genomic_DNA"/>
</dbReference>
<dbReference type="EMBL" id="AE017042">
    <property type="protein sequence ID" value="AAS61012.1"/>
    <property type="molecule type" value="Genomic_DNA"/>
</dbReference>
<dbReference type="PIR" id="AH0386">
    <property type="entry name" value="AH0386"/>
</dbReference>
<dbReference type="RefSeq" id="WP_002208668.1">
    <property type="nucleotide sequence ID" value="NZ_WUCM01000134.1"/>
</dbReference>
<dbReference type="RefSeq" id="YP_002348089.1">
    <property type="nucleotide sequence ID" value="NC_003143.1"/>
</dbReference>
<dbReference type="SMR" id="Q8ZC39"/>
<dbReference type="STRING" id="214092.YPO3184"/>
<dbReference type="PaxDb" id="214092-YPO3184"/>
<dbReference type="DNASU" id="1145946"/>
<dbReference type="EnsemblBacteria" id="AAS61012">
    <property type="protein sequence ID" value="AAS61012"/>
    <property type="gene ID" value="YP_0747"/>
</dbReference>
<dbReference type="GeneID" id="57975529"/>
<dbReference type="KEGG" id="ype:YPO3184"/>
<dbReference type="KEGG" id="ypk:y0999"/>
<dbReference type="KEGG" id="ypm:YP_0747"/>
<dbReference type="PATRIC" id="fig|214092.21.peg.3640"/>
<dbReference type="eggNOG" id="COG1327">
    <property type="taxonomic scope" value="Bacteria"/>
</dbReference>
<dbReference type="HOGENOM" id="CLU_108412_0_0_6"/>
<dbReference type="OMA" id="YRFTTYE"/>
<dbReference type="OrthoDB" id="9807461at2"/>
<dbReference type="Proteomes" id="UP000000815">
    <property type="component" value="Chromosome"/>
</dbReference>
<dbReference type="Proteomes" id="UP000001019">
    <property type="component" value="Chromosome"/>
</dbReference>
<dbReference type="Proteomes" id="UP000002490">
    <property type="component" value="Chromosome"/>
</dbReference>
<dbReference type="GO" id="GO:0005524">
    <property type="term" value="F:ATP binding"/>
    <property type="evidence" value="ECO:0007669"/>
    <property type="project" value="UniProtKB-KW"/>
</dbReference>
<dbReference type="GO" id="GO:0003690">
    <property type="term" value="F:double-stranded DNA binding"/>
    <property type="evidence" value="ECO:0000318"/>
    <property type="project" value="GO_Central"/>
</dbReference>
<dbReference type="GO" id="GO:0008270">
    <property type="term" value="F:zinc ion binding"/>
    <property type="evidence" value="ECO:0007669"/>
    <property type="project" value="UniProtKB-UniRule"/>
</dbReference>
<dbReference type="GO" id="GO:0045892">
    <property type="term" value="P:negative regulation of DNA-templated transcription"/>
    <property type="evidence" value="ECO:0000318"/>
    <property type="project" value="GO_Central"/>
</dbReference>
<dbReference type="HAMAP" id="MF_00440">
    <property type="entry name" value="NrdR"/>
    <property type="match status" value="1"/>
</dbReference>
<dbReference type="InterPro" id="IPR005144">
    <property type="entry name" value="ATP-cone_dom"/>
</dbReference>
<dbReference type="InterPro" id="IPR055173">
    <property type="entry name" value="NrdR-like_N"/>
</dbReference>
<dbReference type="InterPro" id="IPR003796">
    <property type="entry name" value="RNR_NrdR-like"/>
</dbReference>
<dbReference type="NCBIfam" id="TIGR00244">
    <property type="entry name" value="transcriptional regulator NrdR"/>
    <property type="match status" value="1"/>
</dbReference>
<dbReference type="PANTHER" id="PTHR30455">
    <property type="entry name" value="TRANSCRIPTIONAL REPRESSOR NRDR"/>
    <property type="match status" value="1"/>
</dbReference>
<dbReference type="PANTHER" id="PTHR30455:SF2">
    <property type="entry name" value="TRANSCRIPTIONAL REPRESSOR NRDR"/>
    <property type="match status" value="1"/>
</dbReference>
<dbReference type="Pfam" id="PF03477">
    <property type="entry name" value="ATP-cone"/>
    <property type="match status" value="1"/>
</dbReference>
<dbReference type="Pfam" id="PF22811">
    <property type="entry name" value="Zn_ribbon_NrdR"/>
    <property type="match status" value="1"/>
</dbReference>
<dbReference type="PROSITE" id="PS51161">
    <property type="entry name" value="ATP_CONE"/>
    <property type="match status" value="1"/>
</dbReference>